<organism>
    <name type="scientific">Arabidopsis thaliana</name>
    <name type="common">Mouse-ear cress</name>
    <dbReference type="NCBI Taxonomy" id="3702"/>
    <lineage>
        <taxon>Eukaryota</taxon>
        <taxon>Viridiplantae</taxon>
        <taxon>Streptophyta</taxon>
        <taxon>Embryophyta</taxon>
        <taxon>Tracheophyta</taxon>
        <taxon>Spermatophyta</taxon>
        <taxon>Magnoliopsida</taxon>
        <taxon>eudicotyledons</taxon>
        <taxon>Gunneridae</taxon>
        <taxon>Pentapetalae</taxon>
        <taxon>rosids</taxon>
        <taxon>malvids</taxon>
        <taxon>Brassicales</taxon>
        <taxon>Brassicaceae</taxon>
        <taxon>Camelineae</taxon>
        <taxon>Arabidopsis</taxon>
    </lineage>
</organism>
<accession>Q9SRI2</accession>
<gene>
    <name type="primary">NPF5.9</name>
    <name type="ordered locus">At3g01350</name>
    <name type="ORF">T13O15.11</name>
    <name type="ORF">T22N4.2</name>
</gene>
<name>PTR31_ARATH</name>
<sequence length="563" mass="62782">MDLEQKTRGLSKSCALLIVIAGMERYAFKGVASNLVTYLTDVVKMSNSRAAKTVNTWAGFTSMLPLFSAPLADTYWDRFFTILASSSVYFVGLVGLTWTAFAGSRSATKTISSYFLYSSLCLVSIGLGVLNPSLQAFGADQLDHDLDKNFDLSSGDQKDAKATRKTQFFQLWYFGVCTGSLMGVTVMAYIQDTFGWVLGFAIPGIVIFLSILVFMSGCGIYVYAPGARLKKKTTTTPFEKILKFIKGRVVKQRSIYTLADEKDLDAMELELEERPLCKCETEDIETPSTTSKGLEDDESSKTVFSGIDNVKLVIRLFPIWMMLLMFAVIFQLPATFFTKQGVTMKRNIGSNFKIPPATLQSTITLSIILLMPLYDKILIPITKRIKKNGTGISVMERMGVGMFLSIIAIVIAAIVERKRLAISQKMKTLPDYDPETVPLSIFWLLPQYILLGISDIFTVVGMQEFFYSEVPVRMRTMGFALYTSVFGVGSFVSAALISIVEAYSSSTGDRQNWFADDMSEARLDKYYWLLALTSTISFVVYIFLCKFFKSSSDQGDEKEEAPK</sequence>
<reference key="1">
    <citation type="journal article" date="2000" name="Nature">
        <title>Sequence and analysis of chromosome 3 of the plant Arabidopsis thaliana.</title>
        <authorList>
            <person name="Salanoubat M."/>
            <person name="Lemcke K."/>
            <person name="Rieger M."/>
            <person name="Ansorge W."/>
            <person name="Unseld M."/>
            <person name="Fartmann B."/>
            <person name="Valle G."/>
            <person name="Bloecker H."/>
            <person name="Perez-Alonso M."/>
            <person name="Obermaier B."/>
            <person name="Delseny M."/>
            <person name="Boutry M."/>
            <person name="Grivell L.A."/>
            <person name="Mache R."/>
            <person name="Puigdomenech P."/>
            <person name="De Simone V."/>
            <person name="Choisne N."/>
            <person name="Artiguenave F."/>
            <person name="Robert C."/>
            <person name="Brottier P."/>
            <person name="Wincker P."/>
            <person name="Cattolico L."/>
            <person name="Weissenbach J."/>
            <person name="Saurin W."/>
            <person name="Quetier F."/>
            <person name="Schaefer M."/>
            <person name="Mueller-Auer S."/>
            <person name="Gabel C."/>
            <person name="Fuchs M."/>
            <person name="Benes V."/>
            <person name="Wurmbach E."/>
            <person name="Drzonek H."/>
            <person name="Erfle H."/>
            <person name="Jordan N."/>
            <person name="Bangert S."/>
            <person name="Wiedelmann R."/>
            <person name="Kranz H."/>
            <person name="Voss H."/>
            <person name="Holland R."/>
            <person name="Brandt P."/>
            <person name="Nyakatura G."/>
            <person name="Vezzi A."/>
            <person name="D'Angelo M."/>
            <person name="Pallavicini A."/>
            <person name="Toppo S."/>
            <person name="Simionati B."/>
            <person name="Conrad A."/>
            <person name="Hornischer K."/>
            <person name="Kauer G."/>
            <person name="Loehnert T.-H."/>
            <person name="Nordsiek G."/>
            <person name="Reichelt J."/>
            <person name="Scharfe M."/>
            <person name="Schoen O."/>
            <person name="Bargues M."/>
            <person name="Terol J."/>
            <person name="Climent J."/>
            <person name="Navarro P."/>
            <person name="Collado C."/>
            <person name="Perez-Perez A."/>
            <person name="Ottenwaelder B."/>
            <person name="Duchemin D."/>
            <person name="Cooke R."/>
            <person name="Laudie M."/>
            <person name="Berger-Llauro C."/>
            <person name="Purnelle B."/>
            <person name="Masuy D."/>
            <person name="de Haan M."/>
            <person name="Maarse A.C."/>
            <person name="Alcaraz J.-P."/>
            <person name="Cottet A."/>
            <person name="Casacuberta E."/>
            <person name="Monfort A."/>
            <person name="Argiriou A."/>
            <person name="Flores M."/>
            <person name="Liguori R."/>
            <person name="Vitale D."/>
            <person name="Mannhaupt G."/>
            <person name="Haase D."/>
            <person name="Schoof H."/>
            <person name="Rudd S."/>
            <person name="Zaccaria P."/>
            <person name="Mewes H.-W."/>
            <person name="Mayer K.F.X."/>
            <person name="Kaul S."/>
            <person name="Town C.D."/>
            <person name="Koo H.L."/>
            <person name="Tallon L.J."/>
            <person name="Jenkins J."/>
            <person name="Rooney T."/>
            <person name="Rizzo M."/>
            <person name="Walts A."/>
            <person name="Utterback T."/>
            <person name="Fujii C.Y."/>
            <person name="Shea T.P."/>
            <person name="Creasy T.H."/>
            <person name="Haas B."/>
            <person name="Maiti R."/>
            <person name="Wu D."/>
            <person name="Peterson J."/>
            <person name="Van Aken S."/>
            <person name="Pai G."/>
            <person name="Militscher J."/>
            <person name="Sellers P."/>
            <person name="Gill J.E."/>
            <person name="Feldblyum T.V."/>
            <person name="Preuss D."/>
            <person name="Lin X."/>
            <person name="Nierman W.C."/>
            <person name="Salzberg S.L."/>
            <person name="White O."/>
            <person name="Venter J.C."/>
            <person name="Fraser C.M."/>
            <person name="Kaneko T."/>
            <person name="Nakamura Y."/>
            <person name="Sato S."/>
            <person name="Kato T."/>
            <person name="Asamizu E."/>
            <person name="Sasamoto S."/>
            <person name="Kimura T."/>
            <person name="Idesawa K."/>
            <person name="Kawashima K."/>
            <person name="Kishida Y."/>
            <person name="Kiyokawa C."/>
            <person name="Kohara M."/>
            <person name="Matsumoto M."/>
            <person name="Matsuno A."/>
            <person name="Muraki A."/>
            <person name="Nakayama S."/>
            <person name="Nakazaki N."/>
            <person name="Shinpo S."/>
            <person name="Takeuchi C."/>
            <person name="Wada T."/>
            <person name="Watanabe A."/>
            <person name="Yamada M."/>
            <person name="Yasuda M."/>
            <person name="Tabata S."/>
        </authorList>
    </citation>
    <scope>NUCLEOTIDE SEQUENCE [LARGE SCALE GENOMIC DNA]</scope>
    <source>
        <strain>cv. Columbia</strain>
    </source>
</reference>
<reference key="2">
    <citation type="journal article" date="2017" name="Plant J.">
        <title>Araport11: a complete reannotation of the Arabidopsis thaliana reference genome.</title>
        <authorList>
            <person name="Cheng C.Y."/>
            <person name="Krishnakumar V."/>
            <person name="Chan A.P."/>
            <person name="Thibaud-Nissen F."/>
            <person name="Schobel S."/>
            <person name="Town C.D."/>
        </authorList>
    </citation>
    <scope>GENOME REANNOTATION</scope>
    <source>
        <strain>cv. Columbia</strain>
    </source>
</reference>
<reference key="3">
    <citation type="journal article" date="2007" name="FEBS Lett.">
        <title>Nitrate transporters and peptide transporters.</title>
        <authorList>
            <person name="Tsay Y.F."/>
            <person name="Chiu C.C."/>
            <person name="Tsai C.B."/>
            <person name="Ho C.H."/>
            <person name="Hsu P.K."/>
        </authorList>
    </citation>
    <scope>TISSUE SPECIFICITY</scope>
    <scope>GENE FAMILY</scope>
</reference>
<reference key="4">
    <citation type="journal article" date="2010" name="Plant Cell">
        <title>The Arabidopsis nitrate transporter NRT1.8 functions in nitrate removal from the xylem sap and mediates cadmium tolerance.</title>
        <authorList>
            <person name="Li J.Y."/>
            <person name="Fu Y.L."/>
            <person name="Pike S.M."/>
            <person name="Bao J."/>
            <person name="Tian W."/>
            <person name="Zhang Y."/>
            <person name="Chen C.Z."/>
            <person name="Zhang Y."/>
            <person name="Li H.M."/>
            <person name="Huang J."/>
            <person name="Li L.G."/>
            <person name="Schroeder J.I."/>
            <person name="Gassmann W."/>
            <person name="Gong J.M."/>
        </authorList>
    </citation>
    <scope>GENE FAMILY</scope>
</reference>
<reference key="5">
    <citation type="journal article" date="2014" name="Trends Plant Sci.">
        <title>A unified nomenclature of NITRATE TRANSPORTER 1/PEPTIDE TRANSPORTER family members in plants.</title>
        <authorList>
            <person name="Leran S."/>
            <person name="Varala K."/>
            <person name="Boyer J.C."/>
            <person name="Chiurazzi M."/>
            <person name="Crawford N."/>
            <person name="Daniel-Vedele F."/>
            <person name="David L."/>
            <person name="Dickstein R."/>
            <person name="Fernandez E."/>
            <person name="Forde B."/>
            <person name="Gassmann W."/>
            <person name="Geiger D."/>
            <person name="Gojon A."/>
            <person name="Gong J.M."/>
            <person name="Halkier B.A."/>
            <person name="Harris J.M."/>
            <person name="Hedrich R."/>
            <person name="Limami A.M."/>
            <person name="Rentsch D."/>
            <person name="Seo M."/>
            <person name="Tsay Y.F."/>
            <person name="Zhang M."/>
            <person name="Coruzzi G."/>
            <person name="Lacombe B."/>
        </authorList>
    </citation>
    <scope>GENE FAMILY</scope>
    <scope>NOMENCLATURE</scope>
</reference>
<dbReference type="EMBL" id="AC010676">
    <property type="protein sequence ID" value="AAF03501.1"/>
    <property type="molecule type" value="Genomic_DNA"/>
</dbReference>
<dbReference type="EMBL" id="CP002686">
    <property type="protein sequence ID" value="AEE73654.1"/>
    <property type="molecule type" value="Genomic_DNA"/>
</dbReference>
<dbReference type="RefSeq" id="NP_186784.1">
    <property type="nucleotide sequence ID" value="NM_111001.2"/>
</dbReference>
<dbReference type="SMR" id="Q9SRI2"/>
<dbReference type="FunCoup" id="Q9SRI2">
    <property type="interactions" value="2"/>
</dbReference>
<dbReference type="STRING" id="3702.Q9SRI2"/>
<dbReference type="TCDB" id="2.A.17.3.26">
    <property type="family name" value="the proton-dependent oligopeptide transporter (pot/ptr) family"/>
</dbReference>
<dbReference type="PaxDb" id="3702-AT3G01350.1"/>
<dbReference type="EnsemblPlants" id="AT3G01350.1">
    <property type="protein sequence ID" value="AT3G01350.1"/>
    <property type="gene ID" value="AT3G01350"/>
</dbReference>
<dbReference type="GeneID" id="819616"/>
<dbReference type="Gramene" id="AT3G01350.1">
    <property type="protein sequence ID" value="AT3G01350.1"/>
    <property type="gene ID" value="AT3G01350"/>
</dbReference>
<dbReference type="KEGG" id="ath:AT3G01350"/>
<dbReference type="Araport" id="AT3G01350"/>
<dbReference type="TAIR" id="AT3G01350"/>
<dbReference type="eggNOG" id="KOG1237">
    <property type="taxonomic scope" value="Eukaryota"/>
</dbReference>
<dbReference type="HOGENOM" id="CLU_009313_4_1_1"/>
<dbReference type="InParanoid" id="Q9SRI2"/>
<dbReference type="OMA" id="CKFFKSS"/>
<dbReference type="PhylomeDB" id="Q9SRI2"/>
<dbReference type="PRO" id="PR:Q9SRI2"/>
<dbReference type="Proteomes" id="UP000006548">
    <property type="component" value="Chromosome 3"/>
</dbReference>
<dbReference type="ExpressionAtlas" id="Q9SRI2">
    <property type="expression patterns" value="baseline and differential"/>
</dbReference>
<dbReference type="GO" id="GO:0016020">
    <property type="term" value="C:membrane"/>
    <property type="evidence" value="ECO:0007669"/>
    <property type="project" value="UniProtKB-SubCell"/>
</dbReference>
<dbReference type="GO" id="GO:0022857">
    <property type="term" value="F:transmembrane transporter activity"/>
    <property type="evidence" value="ECO:0007669"/>
    <property type="project" value="InterPro"/>
</dbReference>
<dbReference type="FunFam" id="1.20.1250.20:FF:000311">
    <property type="entry name" value="Protein NRT1/ PTR FAMILY 5.8"/>
    <property type="match status" value="1"/>
</dbReference>
<dbReference type="Gene3D" id="1.20.1250.20">
    <property type="entry name" value="MFS general substrate transporter like domains"/>
    <property type="match status" value="1"/>
</dbReference>
<dbReference type="InterPro" id="IPR036259">
    <property type="entry name" value="MFS_trans_sf"/>
</dbReference>
<dbReference type="InterPro" id="IPR000109">
    <property type="entry name" value="POT_fam"/>
</dbReference>
<dbReference type="PANTHER" id="PTHR11654">
    <property type="entry name" value="OLIGOPEPTIDE TRANSPORTER-RELATED"/>
    <property type="match status" value="1"/>
</dbReference>
<dbReference type="Pfam" id="PF00854">
    <property type="entry name" value="PTR2"/>
    <property type="match status" value="1"/>
</dbReference>
<dbReference type="SUPFAM" id="SSF103473">
    <property type="entry name" value="MFS general substrate transporter"/>
    <property type="match status" value="1"/>
</dbReference>
<protein>
    <recommendedName>
        <fullName>Protein NRT1/ PTR FAMILY 5.9</fullName>
        <shortName>AtNPF5.9</shortName>
    </recommendedName>
</protein>
<evidence type="ECO:0000250" key="1"/>
<evidence type="ECO:0000250" key="2">
    <source>
        <dbReference type="UniProtKB" id="Q05085"/>
    </source>
</evidence>
<evidence type="ECO:0000255" key="3"/>
<evidence type="ECO:0000269" key="4">
    <source>
    </source>
</evidence>
<evidence type="ECO:0000305" key="5"/>
<keyword id="KW-0472">Membrane</keyword>
<keyword id="KW-0597">Phosphoprotein</keyword>
<keyword id="KW-1185">Reference proteome</keyword>
<keyword id="KW-0812">Transmembrane</keyword>
<keyword id="KW-1133">Transmembrane helix</keyword>
<keyword id="KW-0813">Transport</keyword>
<feature type="chain" id="PRO_0000399965" description="Protein NRT1/ PTR FAMILY 5.9">
    <location>
        <begin position="1"/>
        <end position="563"/>
    </location>
</feature>
<feature type="transmembrane region" description="Helical" evidence="3">
    <location>
        <begin position="56"/>
        <end position="76"/>
    </location>
</feature>
<feature type="transmembrane region" description="Helical" evidence="3">
    <location>
        <begin position="82"/>
        <end position="102"/>
    </location>
</feature>
<feature type="transmembrane region" description="Helical" evidence="3">
    <location>
        <begin position="110"/>
        <end position="130"/>
    </location>
</feature>
<feature type="transmembrane region" description="Helical" evidence="3">
    <location>
        <begin position="168"/>
        <end position="188"/>
    </location>
</feature>
<feature type="transmembrane region" description="Helical" evidence="3">
    <location>
        <begin position="194"/>
        <end position="214"/>
    </location>
</feature>
<feature type="transmembrane region" description="Helical" evidence="3">
    <location>
        <begin position="317"/>
        <end position="337"/>
    </location>
</feature>
<feature type="transmembrane region" description="Helical" evidence="3">
    <location>
        <begin position="362"/>
        <end position="382"/>
    </location>
</feature>
<feature type="transmembrane region" description="Helical" evidence="3">
    <location>
        <begin position="394"/>
        <end position="414"/>
    </location>
</feature>
<feature type="transmembrane region" description="Helical" evidence="3">
    <location>
        <begin position="441"/>
        <end position="461"/>
    </location>
</feature>
<feature type="transmembrane region" description="Helical" evidence="3">
    <location>
        <begin position="479"/>
        <end position="499"/>
    </location>
</feature>
<feature type="transmembrane region" description="Helical" evidence="3">
    <location>
        <begin position="528"/>
        <end position="548"/>
    </location>
</feature>
<feature type="modified residue" description="Phosphothreonine" evidence="2">
    <location>
        <position position="81"/>
    </location>
</feature>
<proteinExistence type="evidence at transcript level"/>
<comment type="subcellular location">
    <subcellularLocation>
        <location evidence="1">Membrane</location>
        <topology evidence="1">Multi-pass membrane protein</topology>
    </subcellularLocation>
</comment>
<comment type="tissue specificity">
    <text evidence="4">Expressed in roots and flowers.</text>
</comment>
<comment type="similarity">
    <text evidence="5">Belongs to the major facilitator superfamily. Proton-dependent oligopeptide transporter (POT/PTR) (TC 2.A.17) family.</text>
</comment>